<proteinExistence type="evidence at protein level"/>
<name>RS32_METJA</name>
<organism>
    <name type="scientific">Methanocaldococcus jannaschii (strain ATCC 43067 / DSM 2661 / JAL-1 / JCM 10045 / NBRC 100440)</name>
    <name type="common">Methanococcus jannaschii</name>
    <dbReference type="NCBI Taxonomy" id="243232"/>
    <lineage>
        <taxon>Archaea</taxon>
        <taxon>Methanobacteriati</taxon>
        <taxon>Methanobacteriota</taxon>
        <taxon>Methanomada group</taxon>
        <taxon>Methanococci</taxon>
        <taxon>Methanococcales</taxon>
        <taxon>Methanocaldococcaceae</taxon>
        <taxon>Methanocaldococcus</taxon>
    </lineage>
</organism>
<gene>
    <name type="primary">rpl41e</name>
    <name type="ordered locus">MJ0242</name>
</gene>
<sequence>MIPIKRSSRRWKKKGRMRWKWYKKRLRRLKRERKRARS</sequence>
<reference key="1">
    <citation type="journal article" date="1996" name="Science">
        <title>Complete genome sequence of the methanogenic archaeon, Methanococcus jannaschii.</title>
        <authorList>
            <person name="Bult C.J."/>
            <person name="White O."/>
            <person name="Olsen G.J."/>
            <person name="Zhou L."/>
            <person name="Fleischmann R.D."/>
            <person name="Sutton G.G."/>
            <person name="Blake J.A."/>
            <person name="FitzGerald L.M."/>
            <person name="Clayton R.A."/>
            <person name="Gocayne J.D."/>
            <person name="Kerlavage A.R."/>
            <person name="Dougherty B.A."/>
            <person name="Tomb J.-F."/>
            <person name="Adams M.D."/>
            <person name="Reich C.I."/>
            <person name="Overbeek R."/>
            <person name="Kirkness E.F."/>
            <person name="Weinstock K.G."/>
            <person name="Merrick J.M."/>
            <person name="Glodek A."/>
            <person name="Scott J.L."/>
            <person name="Geoghagen N.S.M."/>
            <person name="Weidman J.F."/>
            <person name="Fuhrmann J.L."/>
            <person name="Nguyen D."/>
            <person name="Utterback T.R."/>
            <person name="Kelley J.M."/>
            <person name="Peterson J.D."/>
            <person name="Sadow P.W."/>
            <person name="Hanna M.C."/>
            <person name="Cotton M.D."/>
            <person name="Roberts K.M."/>
            <person name="Hurst M.A."/>
            <person name="Kaine B.P."/>
            <person name="Borodovsky M."/>
            <person name="Klenk H.-P."/>
            <person name="Fraser C.M."/>
            <person name="Smith H.O."/>
            <person name="Woese C.R."/>
            <person name="Venter J.C."/>
        </authorList>
    </citation>
    <scope>NUCLEOTIDE SEQUENCE [LARGE SCALE GENOMIC DNA]</scope>
    <source>
        <strain>ATCC 43067 / DSM 2661 / JAL-1 / JCM 10045 / NBRC 100440</strain>
    </source>
</reference>
<reference key="2">
    <citation type="unpublished observations" date="2023-10">
        <authorList>
            <person name="Leibundgut M.A."/>
            <person name="Ban N."/>
        </authorList>
    </citation>
    <scope>REVISION OF SUBUNIT</scope>
    <scope>NOMENCLATURE</scope>
</reference>
<protein>
    <recommendedName>
        <fullName evidence="2">Small ribosomal subunit protein eS32</fullName>
    </recommendedName>
    <alternativeName>
        <fullName>50S ribosomal protein L41e</fullName>
    </alternativeName>
    <alternativeName>
        <fullName evidence="1">Large ribosomal subunit protein eL41</fullName>
    </alternativeName>
</protein>
<dbReference type="EMBL" id="L77117">
    <property type="protein sequence ID" value="AAB98230.1"/>
    <property type="status" value="ALT_SEQ"/>
    <property type="molecule type" value="Genomic_DNA"/>
</dbReference>
<dbReference type="PIR" id="C64330">
    <property type="entry name" value="C64330"/>
</dbReference>
<dbReference type="SMR" id="P54025"/>
<dbReference type="FunCoup" id="P54025">
    <property type="interactions" value="64"/>
</dbReference>
<dbReference type="STRING" id="243232.MJ_0242"/>
<dbReference type="PaxDb" id="243232-MJ_0242"/>
<dbReference type="EnsemblBacteria" id="AAB98230">
    <property type="protein sequence ID" value="AAB98230"/>
    <property type="gene ID" value="MJ_0242"/>
</dbReference>
<dbReference type="KEGG" id="mja:MJ_0242"/>
<dbReference type="HOGENOM" id="CLU_220499_2_0_2"/>
<dbReference type="InParanoid" id="P54025"/>
<dbReference type="Proteomes" id="UP000000805">
    <property type="component" value="Chromosome"/>
</dbReference>
<dbReference type="GO" id="GO:1990904">
    <property type="term" value="C:ribonucleoprotein complex"/>
    <property type="evidence" value="ECO:0007669"/>
    <property type="project" value="UniProtKB-KW"/>
</dbReference>
<dbReference type="GO" id="GO:0005840">
    <property type="term" value="C:ribosome"/>
    <property type="evidence" value="ECO:0007669"/>
    <property type="project" value="UniProtKB-KW"/>
</dbReference>
<keyword id="KW-1185">Reference proteome</keyword>
<keyword id="KW-0687">Ribonucleoprotein</keyword>
<keyword id="KW-0689">Ribosomal protein</keyword>
<feature type="chain" id="PRO_0000198075" description="Small ribosomal subunit protein eS32">
    <location>
        <begin position="1"/>
        <end position="38"/>
    </location>
</feature>
<evidence type="ECO:0000305" key="1"/>
<evidence type="ECO:0000305" key="2">
    <source ref="2"/>
</evidence>
<accession>P54025</accession>
<comment type="subunit">
    <text evidence="2">Component of the small ribosomal subunit (SSU) (Ref.2).</text>
</comment>
<comment type="miscellaneous">
    <text evidence="2">Initially thought to be part of the large ribosomal subunit. Crystal structures show eS32/eL41 to be a small ribosomal subunit forming a bridge at the interface of the 2 subunits.</text>
</comment>
<comment type="similarity">
    <text evidence="1">Belongs to the eukaryotic ribosomal protein eS32 family.</text>
</comment>
<comment type="sequence caution" evidence="1">
    <conflict type="erroneous initiation">
        <sequence resource="EMBL-CDS" id="AAB98230"/>
    </conflict>
    <text>Truncated N-terminus.</text>
</comment>
<comment type="sequence caution" evidence="1">
    <conflict type="frameshift">
        <sequence resource="EMBL-CDS" id="AAB98230"/>
    </conflict>
</comment>